<accession>B9J9M4</accession>
<reference key="1">
    <citation type="journal article" date="2009" name="J. Bacteriol.">
        <title>Genome sequences of three Agrobacterium biovars help elucidate the evolution of multichromosome genomes in bacteria.</title>
        <authorList>
            <person name="Slater S.C."/>
            <person name="Goldman B.S."/>
            <person name="Goodner B."/>
            <person name="Setubal J.C."/>
            <person name="Farrand S.K."/>
            <person name="Nester E.W."/>
            <person name="Burr T.J."/>
            <person name="Banta L."/>
            <person name="Dickerman A.W."/>
            <person name="Paulsen I."/>
            <person name="Otten L."/>
            <person name="Suen G."/>
            <person name="Welch R."/>
            <person name="Almeida N.F."/>
            <person name="Arnold F."/>
            <person name="Burton O.T."/>
            <person name="Du Z."/>
            <person name="Ewing A."/>
            <person name="Godsy E."/>
            <person name="Heisel S."/>
            <person name="Houmiel K.L."/>
            <person name="Jhaveri J."/>
            <person name="Lu J."/>
            <person name="Miller N.M."/>
            <person name="Norton S."/>
            <person name="Chen Q."/>
            <person name="Phoolcharoen W."/>
            <person name="Ohlin V."/>
            <person name="Ondrusek D."/>
            <person name="Pride N."/>
            <person name="Stricklin S.L."/>
            <person name="Sun J."/>
            <person name="Wheeler C."/>
            <person name="Wilson L."/>
            <person name="Zhu H."/>
            <person name="Wood D.W."/>
        </authorList>
    </citation>
    <scope>NUCLEOTIDE SEQUENCE [LARGE SCALE GENOMIC DNA]</scope>
    <source>
        <strain>K84 / ATCC BAA-868</strain>
    </source>
</reference>
<feature type="chain" id="PRO_1000176944" description="Large ribosomal subunit protein bL31">
    <location>
        <begin position="1"/>
        <end position="73"/>
    </location>
</feature>
<dbReference type="EMBL" id="CP000628">
    <property type="protein sequence ID" value="ACM27625.1"/>
    <property type="molecule type" value="Genomic_DNA"/>
</dbReference>
<dbReference type="RefSeq" id="WP_007701269.1">
    <property type="nucleotide sequence ID" value="NC_011985.1"/>
</dbReference>
<dbReference type="SMR" id="B9J9M4"/>
<dbReference type="STRING" id="311403.Arad_3749"/>
<dbReference type="GeneID" id="86849484"/>
<dbReference type="KEGG" id="ara:Arad_3749"/>
<dbReference type="eggNOG" id="COG0254">
    <property type="taxonomic scope" value="Bacteria"/>
</dbReference>
<dbReference type="HOGENOM" id="CLU_114306_3_2_5"/>
<dbReference type="Proteomes" id="UP000001600">
    <property type="component" value="Chromosome 1"/>
</dbReference>
<dbReference type="GO" id="GO:1990904">
    <property type="term" value="C:ribonucleoprotein complex"/>
    <property type="evidence" value="ECO:0007669"/>
    <property type="project" value="UniProtKB-KW"/>
</dbReference>
<dbReference type="GO" id="GO:0005840">
    <property type="term" value="C:ribosome"/>
    <property type="evidence" value="ECO:0007669"/>
    <property type="project" value="UniProtKB-KW"/>
</dbReference>
<dbReference type="GO" id="GO:0019843">
    <property type="term" value="F:rRNA binding"/>
    <property type="evidence" value="ECO:0007669"/>
    <property type="project" value="UniProtKB-KW"/>
</dbReference>
<dbReference type="GO" id="GO:0003735">
    <property type="term" value="F:structural constituent of ribosome"/>
    <property type="evidence" value="ECO:0007669"/>
    <property type="project" value="InterPro"/>
</dbReference>
<dbReference type="GO" id="GO:0006412">
    <property type="term" value="P:translation"/>
    <property type="evidence" value="ECO:0007669"/>
    <property type="project" value="UniProtKB-UniRule"/>
</dbReference>
<dbReference type="Gene3D" id="4.10.830.30">
    <property type="entry name" value="Ribosomal protein L31"/>
    <property type="match status" value="1"/>
</dbReference>
<dbReference type="HAMAP" id="MF_00501">
    <property type="entry name" value="Ribosomal_bL31_1"/>
    <property type="match status" value="1"/>
</dbReference>
<dbReference type="InterPro" id="IPR034704">
    <property type="entry name" value="Ribosomal_bL28/bL31-like_sf"/>
</dbReference>
<dbReference type="InterPro" id="IPR002150">
    <property type="entry name" value="Ribosomal_bL31"/>
</dbReference>
<dbReference type="InterPro" id="IPR027491">
    <property type="entry name" value="Ribosomal_bL31_A"/>
</dbReference>
<dbReference type="InterPro" id="IPR042105">
    <property type="entry name" value="Ribosomal_bL31_sf"/>
</dbReference>
<dbReference type="NCBIfam" id="TIGR00105">
    <property type="entry name" value="L31"/>
    <property type="match status" value="1"/>
</dbReference>
<dbReference type="NCBIfam" id="NF001809">
    <property type="entry name" value="PRK00528.1"/>
    <property type="match status" value="1"/>
</dbReference>
<dbReference type="PANTHER" id="PTHR33280">
    <property type="entry name" value="50S RIBOSOMAL PROTEIN L31, CHLOROPLASTIC"/>
    <property type="match status" value="1"/>
</dbReference>
<dbReference type="PANTHER" id="PTHR33280:SF6">
    <property type="entry name" value="LARGE RIBOSOMAL SUBUNIT PROTEIN BL31A"/>
    <property type="match status" value="1"/>
</dbReference>
<dbReference type="Pfam" id="PF01197">
    <property type="entry name" value="Ribosomal_L31"/>
    <property type="match status" value="1"/>
</dbReference>
<dbReference type="PRINTS" id="PR01249">
    <property type="entry name" value="RIBOSOMALL31"/>
</dbReference>
<dbReference type="SUPFAM" id="SSF143800">
    <property type="entry name" value="L28p-like"/>
    <property type="match status" value="1"/>
</dbReference>
<dbReference type="PROSITE" id="PS01143">
    <property type="entry name" value="RIBOSOMAL_L31"/>
    <property type="match status" value="1"/>
</dbReference>
<gene>
    <name evidence="1" type="primary">rpmE</name>
    <name type="ordered locus">Arad_3749</name>
</gene>
<name>RL31_RHIR8</name>
<proteinExistence type="inferred from homology"/>
<evidence type="ECO:0000255" key="1">
    <source>
        <dbReference type="HAMAP-Rule" id="MF_00501"/>
    </source>
</evidence>
<evidence type="ECO:0000305" key="2"/>
<keyword id="KW-0687">Ribonucleoprotein</keyword>
<keyword id="KW-0689">Ribosomal protein</keyword>
<keyword id="KW-0694">RNA-binding</keyword>
<keyword id="KW-0699">rRNA-binding</keyword>
<sequence>MKANIHPDYHTIKVVMTDGTEYETRSTWGSEGATMNLEIDSKSHPAWTGGNQQLMDRGGRVSKFNKRFGSLGV</sequence>
<comment type="function">
    <text evidence="1">Binds the 23S rRNA.</text>
</comment>
<comment type="subunit">
    <text evidence="1">Part of the 50S ribosomal subunit.</text>
</comment>
<comment type="similarity">
    <text evidence="1">Belongs to the bacterial ribosomal protein bL31 family. Type A subfamily.</text>
</comment>
<organism>
    <name type="scientific">Rhizobium rhizogenes (strain K84 / ATCC BAA-868)</name>
    <name type="common">Agrobacterium radiobacter</name>
    <dbReference type="NCBI Taxonomy" id="311403"/>
    <lineage>
        <taxon>Bacteria</taxon>
        <taxon>Pseudomonadati</taxon>
        <taxon>Pseudomonadota</taxon>
        <taxon>Alphaproteobacteria</taxon>
        <taxon>Hyphomicrobiales</taxon>
        <taxon>Rhizobiaceae</taxon>
        <taxon>Rhizobium/Agrobacterium group</taxon>
        <taxon>Rhizobium</taxon>
    </lineage>
</organism>
<protein>
    <recommendedName>
        <fullName evidence="1">Large ribosomal subunit protein bL31</fullName>
    </recommendedName>
    <alternativeName>
        <fullName evidence="2">50S ribosomal protein L31</fullName>
    </alternativeName>
</protein>